<protein>
    <recommendedName>
        <fullName evidence="5">Glutathione S-transferase Mu 2</fullName>
        <ecNumber evidence="3">2.5.1.18</ecNumber>
    </recommendedName>
    <alternativeName>
        <fullName>GST class-mu 2</fullName>
    </alternativeName>
    <alternativeName>
        <fullName>GSTM2-2</fullName>
    </alternativeName>
</protein>
<comment type="function">
    <text evidence="3 4">Conjugation of reduced glutathione to a wide number of exogenous and endogenous hydrophobic electrophiles. Participates in the formation of novel hepoxilin regioisomers (By similarity). Has activity toward aflatoxin B(1)-8,9-epoxide (AFBO) (PubMed:10869451).</text>
</comment>
<comment type="catalytic activity">
    <reaction evidence="3">
        <text>RX + glutathione = an S-substituted glutathione + a halide anion + H(+)</text>
        <dbReference type="Rhea" id="RHEA:16437"/>
        <dbReference type="ChEBI" id="CHEBI:15378"/>
        <dbReference type="ChEBI" id="CHEBI:16042"/>
        <dbReference type="ChEBI" id="CHEBI:17792"/>
        <dbReference type="ChEBI" id="CHEBI:57925"/>
        <dbReference type="ChEBI" id="CHEBI:90779"/>
        <dbReference type="EC" id="2.5.1.18"/>
    </reaction>
    <physiologicalReaction direction="left-to-right" evidence="3">
        <dbReference type="Rhea" id="RHEA:16438"/>
    </physiologicalReaction>
</comment>
<comment type="catalytic activity">
    <reaction evidence="3">
        <text>11(S)-hydroxy-14(S),15(S)-epoxy-(5Z,8Z,12E)-eicosatrienoate + glutathione = (11S,15S)-dihydroxy-14(R)-S-glutathionyl-(5Z,8Z,12E)-eicosatrienoate</text>
        <dbReference type="Rhea" id="RHEA:50260"/>
        <dbReference type="ChEBI" id="CHEBI:57925"/>
        <dbReference type="ChEBI" id="CHEBI:132200"/>
        <dbReference type="ChEBI" id="CHEBI:132201"/>
    </reaction>
    <physiologicalReaction direction="left-to-right" evidence="3">
        <dbReference type="Rhea" id="RHEA:50261"/>
    </physiologicalReaction>
</comment>
<comment type="subunit">
    <text evidence="1">Homodimer.</text>
</comment>
<comment type="subcellular location">
    <subcellularLocation>
        <location>Cytoplasm</location>
    </subcellularLocation>
</comment>
<comment type="similarity">
    <text evidence="5">Belongs to the GST superfamily. Mu family.</text>
</comment>
<reference key="1">
    <citation type="journal article" date="2000" name="Toxicol. Sci.">
        <title>Mu-class GSTs are responsible for aflatoxin B(1)-8,9-epoxide-conjugating activity in the nonhuman primate Macaca fascicularis liver.</title>
        <authorList>
            <person name="Wang C."/>
            <person name="Bammler T.K."/>
            <person name="Guo Y."/>
            <person name="Kelly E.J."/>
            <person name="Eaton D.L."/>
        </authorList>
    </citation>
    <scope>NUCLEOTIDE SEQUENCE [MRNA]</scope>
    <scope>CHARACTERIZATION</scope>
    <source>
        <tissue>Liver</tissue>
    </source>
</reference>
<proteinExistence type="evidence at protein level"/>
<gene>
    <name type="primary">GSTM2</name>
</gene>
<feature type="chain" id="PRO_0000185819" description="Glutathione S-transferase Mu 2">
    <location>
        <begin position="1"/>
        <end position="218"/>
    </location>
</feature>
<feature type="domain" description="GST N-terminal">
    <location>
        <begin position="2"/>
        <end position="88"/>
    </location>
</feature>
<feature type="domain" description="GST C-terminal">
    <location>
        <begin position="90"/>
        <end position="208"/>
    </location>
</feature>
<feature type="binding site" evidence="2">
    <location>
        <begin position="7"/>
        <end position="8"/>
    </location>
    <ligand>
        <name>glutathione</name>
        <dbReference type="ChEBI" id="CHEBI:57925"/>
    </ligand>
</feature>
<feature type="binding site" evidence="2">
    <location>
        <begin position="43"/>
        <end position="46"/>
    </location>
    <ligand>
        <name>glutathione</name>
        <dbReference type="ChEBI" id="CHEBI:57925"/>
    </ligand>
</feature>
<feature type="binding site" evidence="2">
    <location>
        <position position="50"/>
    </location>
    <ligand>
        <name>glutathione</name>
        <dbReference type="ChEBI" id="CHEBI:57925"/>
    </ligand>
</feature>
<feature type="binding site" evidence="2">
    <location>
        <begin position="59"/>
        <end position="60"/>
    </location>
    <ligand>
        <name>glutathione</name>
        <dbReference type="ChEBI" id="CHEBI:57925"/>
    </ligand>
</feature>
<feature type="binding site" evidence="2">
    <location>
        <begin position="72"/>
        <end position="73"/>
    </location>
    <ligand>
        <name>glutathione</name>
        <dbReference type="ChEBI" id="CHEBI:57925"/>
    </ligand>
</feature>
<feature type="binding site" evidence="1">
    <location>
        <position position="116"/>
    </location>
    <ligand>
        <name>substrate</name>
    </ligand>
</feature>
<feature type="site" description="Important for substrate specificity" evidence="1">
    <location>
        <position position="210"/>
    </location>
</feature>
<feature type="modified residue" description="Phosphoserine" evidence="2">
    <location>
        <position position="27"/>
    </location>
</feature>
<feature type="modified residue" description="Phosphoserine" evidence="2">
    <location>
        <position position="44"/>
    </location>
</feature>
<keyword id="KW-0963">Cytoplasm</keyword>
<keyword id="KW-0443">Lipid metabolism</keyword>
<keyword id="KW-0597">Phosphoprotein</keyword>
<keyword id="KW-1185">Reference proteome</keyword>
<keyword id="KW-0808">Transferase</keyword>
<organism>
    <name type="scientific">Macaca fascicularis</name>
    <name type="common">Crab-eating macaque</name>
    <name type="synonym">Cynomolgus monkey</name>
    <dbReference type="NCBI Taxonomy" id="9541"/>
    <lineage>
        <taxon>Eukaryota</taxon>
        <taxon>Metazoa</taxon>
        <taxon>Chordata</taxon>
        <taxon>Craniata</taxon>
        <taxon>Vertebrata</taxon>
        <taxon>Euteleostomi</taxon>
        <taxon>Mammalia</taxon>
        <taxon>Eutheria</taxon>
        <taxon>Euarchontoglires</taxon>
        <taxon>Primates</taxon>
        <taxon>Haplorrhini</taxon>
        <taxon>Catarrhini</taxon>
        <taxon>Cercopithecidae</taxon>
        <taxon>Cercopithecinae</taxon>
        <taxon>Macaca</taxon>
    </lineage>
</organism>
<sequence length="218" mass="25709">MPMTLGYWNIRGLAHSIRLLLEYTGSSYEEKKYTMGDAPDYDRSQWLNEKFKLGLDFPNLPYLIDGTHKITQSNAILRYIARKHNLCGETEKEKIREDILENQLMDNRMQLARLCYDPDFEKLKPEYLEGLPEMLKLYSQFLGKQPWFLGDKITFVDFIAYDVLERNQVFEPSCLDAFPNLKDFISRFEGLEKISAYMKSSRFLPRPVFTKMAVWGNK</sequence>
<name>GSTM2_MACFA</name>
<accession>Q9TSM4</accession>
<dbReference type="EC" id="2.5.1.18" evidence="3"/>
<dbReference type="EMBL" id="AF200710">
    <property type="protein sequence ID" value="AAF08540.1"/>
    <property type="molecule type" value="mRNA"/>
</dbReference>
<dbReference type="RefSeq" id="NP_001274584.1">
    <property type="nucleotide sequence ID" value="NM_001287655.1"/>
</dbReference>
<dbReference type="SMR" id="Q9TSM4"/>
<dbReference type="STRING" id="9541.ENSMFAP00000039234"/>
<dbReference type="VEuPathDB" id="HostDB:ENSMFAG00000038873"/>
<dbReference type="eggNOG" id="KOG1695">
    <property type="taxonomic scope" value="Eukaryota"/>
</dbReference>
<dbReference type="OMA" id="NEAMDFR"/>
<dbReference type="Proteomes" id="UP000233100">
    <property type="component" value="Chromosome 1"/>
</dbReference>
<dbReference type="GO" id="GO:0005737">
    <property type="term" value="C:cytoplasm"/>
    <property type="evidence" value="ECO:0007669"/>
    <property type="project" value="UniProtKB-SubCell"/>
</dbReference>
<dbReference type="GO" id="GO:0045171">
    <property type="term" value="C:intercellular bridge"/>
    <property type="evidence" value="ECO:0007669"/>
    <property type="project" value="UniProtKB-ARBA"/>
</dbReference>
<dbReference type="GO" id="GO:0004364">
    <property type="term" value="F:glutathione transferase activity"/>
    <property type="evidence" value="ECO:0000250"/>
    <property type="project" value="UniProtKB"/>
</dbReference>
<dbReference type="GO" id="GO:0006749">
    <property type="term" value="P:glutathione metabolic process"/>
    <property type="evidence" value="ECO:0000250"/>
    <property type="project" value="UniProtKB"/>
</dbReference>
<dbReference type="GO" id="GO:0051122">
    <property type="term" value="P:hepoxilin biosynthetic process"/>
    <property type="evidence" value="ECO:0000250"/>
    <property type="project" value="UniProtKB"/>
</dbReference>
<dbReference type="CDD" id="cd03209">
    <property type="entry name" value="GST_C_Mu"/>
    <property type="match status" value="1"/>
</dbReference>
<dbReference type="CDD" id="cd03075">
    <property type="entry name" value="GST_N_Mu"/>
    <property type="match status" value="1"/>
</dbReference>
<dbReference type="FunFam" id="1.20.1050.10:FF:000083">
    <property type="entry name" value="Glutathione S-transferase Mu 1"/>
    <property type="match status" value="1"/>
</dbReference>
<dbReference type="FunFam" id="3.40.30.10:FF:000603">
    <property type="entry name" value="Glutathione S-transferase Mu 1"/>
    <property type="match status" value="1"/>
</dbReference>
<dbReference type="Gene3D" id="1.20.1050.10">
    <property type="match status" value="1"/>
</dbReference>
<dbReference type="Gene3D" id="3.40.30.10">
    <property type="entry name" value="Glutaredoxin"/>
    <property type="match status" value="1"/>
</dbReference>
<dbReference type="InterPro" id="IPR010987">
    <property type="entry name" value="Glutathione-S-Trfase_C-like"/>
</dbReference>
<dbReference type="InterPro" id="IPR036282">
    <property type="entry name" value="Glutathione-S-Trfase_C_sf"/>
</dbReference>
<dbReference type="InterPro" id="IPR004045">
    <property type="entry name" value="Glutathione_S-Trfase_N"/>
</dbReference>
<dbReference type="InterPro" id="IPR004046">
    <property type="entry name" value="GST_C"/>
</dbReference>
<dbReference type="InterPro" id="IPR003081">
    <property type="entry name" value="GST_mu"/>
</dbReference>
<dbReference type="InterPro" id="IPR050213">
    <property type="entry name" value="GST_superfamily"/>
</dbReference>
<dbReference type="InterPro" id="IPR036249">
    <property type="entry name" value="Thioredoxin-like_sf"/>
</dbReference>
<dbReference type="PANTHER" id="PTHR11571">
    <property type="entry name" value="GLUTATHIONE S-TRANSFERASE"/>
    <property type="match status" value="1"/>
</dbReference>
<dbReference type="PANTHER" id="PTHR11571:SF254">
    <property type="entry name" value="GLUTATHIONE S-TRANSFERASE MU 2"/>
    <property type="match status" value="1"/>
</dbReference>
<dbReference type="Pfam" id="PF00043">
    <property type="entry name" value="GST_C"/>
    <property type="match status" value="1"/>
</dbReference>
<dbReference type="Pfam" id="PF02798">
    <property type="entry name" value="GST_N"/>
    <property type="match status" value="1"/>
</dbReference>
<dbReference type="PRINTS" id="PR01267">
    <property type="entry name" value="GSTRNSFRASEM"/>
</dbReference>
<dbReference type="SFLD" id="SFLDG01205">
    <property type="entry name" value="AMPS.1"/>
    <property type="match status" value="1"/>
</dbReference>
<dbReference type="SFLD" id="SFLDG00363">
    <property type="entry name" value="AMPS_(cytGST):_Alpha-__Mu-__Pi"/>
    <property type="match status" value="1"/>
</dbReference>
<dbReference type="SUPFAM" id="SSF47616">
    <property type="entry name" value="GST C-terminal domain-like"/>
    <property type="match status" value="1"/>
</dbReference>
<dbReference type="SUPFAM" id="SSF52833">
    <property type="entry name" value="Thioredoxin-like"/>
    <property type="match status" value="1"/>
</dbReference>
<dbReference type="PROSITE" id="PS50405">
    <property type="entry name" value="GST_CTER"/>
    <property type="match status" value="1"/>
</dbReference>
<dbReference type="PROSITE" id="PS50404">
    <property type="entry name" value="GST_NTER"/>
    <property type="match status" value="1"/>
</dbReference>
<evidence type="ECO:0000250" key="1"/>
<evidence type="ECO:0000250" key="2">
    <source>
        <dbReference type="UniProtKB" id="P08010"/>
    </source>
</evidence>
<evidence type="ECO:0000250" key="3">
    <source>
        <dbReference type="UniProtKB" id="P28161"/>
    </source>
</evidence>
<evidence type="ECO:0000269" key="4">
    <source>
    </source>
</evidence>
<evidence type="ECO:0000305" key="5"/>